<name>PTPN2_MDBVW</name>
<comment type="similarity">
    <text evidence="2">Belongs to the protein-tyrosine phosphatase family.</text>
</comment>
<comment type="caution">
    <text evidence="2">PTP-N2 does not appear to be a functional PTP.</text>
</comment>
<organismHost>
    <name type="scientific">Microplitis demolitor</name>
    <name type="common">Parasitoid wasp</name>
    <dbReference type="NCBI Taxonomy" id="69319"/>
</organismHost>
<protein>
    <recommendedName>
        <fullName>Tyrosine phosphatase-like protein N2</fullName>
        <shortName>PTP-N2</shortName>
    </recommendedName>
</protein>
<organism>
    <name type="scientific">Microplitis demolitor bracovirus (isolate Webb)</name>
    <name type="common">MdBV</name>
    <dbReference type="NCBI Taxonomy" id="654919"/>
    <lineage>
        <taxon>Viruses</taxon>
        <taxon>Viruses incertae sedis</taxon>
        <taxon>Polydnaviriformidae</taxon>
        <taxon>Bracoviriform</taxon>
        <taxon>Microplitis demolitor bracovirus</taxon>
    </lineage>
</organism>
<accession>Q5I127</accession>
<gene>
    <name type="primary">N4</name>
</gene>
<evidence type="ECO:0000255" key="1">
    <source>
        <dbReference type="PROSITE-ProRule" id="PRU00160"/>
    </source>
</evidence>
<evidence type="ECO:0000305" key="2"/>
<keyword id="KW-1185">Reference proteome</keyword>
<reference key="1">
    <citation type="journal article" date="2006" name="Virology">
        <title>Polydnavirus genomes reflect their dual roles as mutualists and pathogens.</title>
        <authorList>
            <person name="Webb B.A."/>
            <person name="Strand M.R."/>
            <person name="Dickey S.E."/>
            <person name="Beck M.H."/>
            <person name="Hilgarth R.S."/>
            <person name="Barney W.E."/>
            <person name="Kadash K."/>
            <person name="Kroemer J.A."/>
            <person name="Lindstrom K.G."/>
            <person name="Rattanadechakul W."/>
            <person name="Shelby K.S."/>
            <person name="Thoetkiattikul H."/>
            <person name="Turnbull M.W."/>
            <person name="Witherell R.A."/>
        </authorList>
    </citation>
    <scope>NUCLEOTIDE SEQUENCE [GENOMIC DNA]</scope>
</reference>
<dbReference type="EMBL" id="AY875689">
    <property type="protein sequence ID" value="AAW51803.1"/>
    <property type="molecule type" value="Genomic_DNA"/>
</dbReference>
<dbReference type="RefSeq" id="YP_239401.1">
    <property type="nucleotide sequence ID" value="NC_007039.1"/>
</dbReference>
<dbReference type="SMR" id="Q5I127"/>
<dbReference type="KEGG" id="vg:5075838"/>
<dbReference type="Proteomes" id="UP000008168">
    <property type="component" value="Genome"/>
</dbReference>
<dbReference type="GO" id="GO:0004725">
    <property type="term" value="F:protein tyrosine phosphatase activity"/>
    <property type="evidence" value="ECO:0007669"/>
    <property type="project" value="InterPro"/>
</dbReference>
<dbReference type="CDD" id="cd00047">
    <property type="entry name" value="PTPc"/>
    <property type="match status" value="1"/>
</dbReference>
<dbReference type="Gene3D" id="3.90.190.10">
    <property type="entry name" value="Protein tyrosine phosphatase superfamily"/>
    <property type="match status" value="1"/>
</dbReference>
<dbReference type="InterPro" id="IPR029021">
    <property type="entry name" value="Prot-tyrosine_phosphatase-like"/>
</dbReference>
<dbReference type="InterPro" id="IPR050348">
    <property type="entry name" value="Protein-Tyr_Phosphatase"/>
</dbReference>
<dbReference type="InterPro" id="IPR000242">
    <property type="entry name" value="PTP_cat"/>
</dbReference>
<dbReference type="PANTHER" id="PTHR19134">
    <property type="entry name" value="RECEPTOR-TYPE TYROSINE-PROTEIN PHOSPHATASE"/>
    <property type="match status" value="1"/>
</dbReference>
<dbReference type="PANTHER" id="PTHR19134:SF559">
    <property type="entry name" value="TYROSINE-PROTEIN PHOSPHATASE DOMAIN-CONTAINING PROTEIN"/>
    <property type="match status" value="1"/>
</dbReference>
<dbReference type="Pfam" id="PF00102">
    <property type="entry name" value="Y_phosphatase"/>
    <property type="match status" value="1"/>
</dbReference>
<dbReference type="SMART" id="SM00194">
    <property type="entry name" value="PTPc"/>
    <property type="match status" value="1"/>
</dbReference>
<dbReference type="SUPFAM" id="SSF52799">
    <property type="entry name" value="(Phosphotyrosine protein) phosphatases II"/>
    <property type="match status" value="1"/>
</dbReference>
<dbReference type="PROSITE" id="PS50055">
    <property type="entry name" value="TYR_PHOSPHATASE_PTP"/>
    <property type="match status" value="1"/>
</dbReference>
<proteinExistence type="inferred from homology"/>
<sequence length="132" mass="15938">MQGPMKNTVADFWKVVWQQHSHVIVMLTKIKEGGNEKCHQYWCPYEDNLLVTEEYTIKTLRVTVRPNYIRTFLEITDKTTQRSRKITHFQCLHWPEHSMPSDLAWFIDFIKMTNRVRKAVHEDILGRFQRVF</sequence>
<feature type="chain" id="PRO_0000405376" description="Tyrosine phosphatase-like protein N2">
    <location>
        <begin position="1"/>
        <end position="132"/>
    </location>
</feature>
<feature type="domain" description="Tyrosine-protein phosphatase" evidence="1">
    <location>
        <begin position="1"/>
        <end position="132"/>
    </location>
</feature>